<accession>B1IMK5</accession>
<evidence type="ECO:0000255" key="1">
    <source>
        <dbReference type="HAMAP-Rule" id="MF_00092"/>
    </source>
</evidence>
<dbReference type="EC" id="3.1.-.-" evidence="1"/>
<dbReference type="EC" id="3.6.4.-" evidence="1"/>
<dbReference type="EMBL" id="CP000939">
    <property type="protein sequence ID" value="ACA44194.1"/>
    <property type="molecule type" value="Genomic_DNA"/>
</dbReference>
<dbReference type="RefSeq" id="WP_003403349.1">
    <property type="nucleotide sequence ID" value="NC_010516.1"/>
</dbReference>
<dbReference type="SMR" id="B1IMK5"/>
<dbReference type="KEGG" id="cbb:CLD_1418"/>
<dbReference type="HOGENOM" id="CLU_011252_2_1_9"/>
<dbReference type="Proteomes" id="UP000008541">
    <property type="component" value="Chromosome"/>
</dbReference>
<dbReference type="GO" id="GO:0005524">
    <property type="term" value="F:ATP binding"/>
    <property type="evidence" value="ECO:0007669"/>
    <property type="project" value="UniProtKB-UniRule"/>
</dbReference>
<dbReference type="GO" id="GO:0016887">
    <property type="term" value="F:ATP hydrolysis activity"/>
    <property type="evidence" value="ECO:0007669"/>
    <property type="project" value="InterPro"/>
</dbReference>
<dbReference type="GO" id="GO:0140664">
    <property type="term" value="F:ATP-dependent DNA damage sensor activity"/>
    <property type="evidence" value="ECO:0007669"/>
    <property type="project" value="InterPro"/>
</dbReference>
<dbReference type="GO" id="GO:0004519">
    <property type="term" value="F:endonuclease activity"/>
    <property type="evidence" value="ECO:0007669"/>
    <property type="project" value="UniProtKB-UniRule"/>
</dbReference>
<dbReference type="GO" id="GO:0030983">
    <property type="term" value="F:mismatched DNA binding"/>
    <property type="evidence" value="ECO:0007669"/>
    <property type="project" value="InterPro"/>
</dbReference>
<dbReference type="GO" id="GO:0043023">
    <property type="term" value="F:ribosomal large subunit binding"/>
    <property type="evidence" value="ECO:0007669"/>
    <property type="project" value="UniProtKB-UniRule"/>
</dbReference>
<dbReference type="GO" id="GO:0019843">
    <property type="term" value="F:rRNA binding"/>
    <property type="evidence" value="ECO:0007669"/>
    <property type="project" value="UniProtKB-UniRule"/>
</dbReference>
<dbReference type="GO" id="GO:0006298">
    <property type="term" value="P:mismatch repair"/>
    <property type="evidence" value="ECO:0007669"/>
    <property type="project" value="InterPro"/>
</dbReference>
<dbReference type="GO" id="GO:0045910">
    <property type="term" value="P:negative regulation of DNA recombination"/>
    <property type="evidence" value="ECO:0007669"/>
    <property type="project" value="InterPro"/>
</dbReference>
<dbReference type="GO" id="GO:0072344">
    <property type="term" value="P:rescue of stalled ribosome"/>
    <property type="evidence" value="ECO:0007669"/>
    <property type="project" value="UniProtKB-UniRule"/>
</dbReference>
<dbReference type="CDD" id="cd03280">
    <property type="entry name" value="ABC_MutS2"/>
    <property type="match status" value="1"/>
</dbReference>
<dbReference type="FunFam" id="3.30.1370.110:FF:000007">
    <property type="entry name" value="Endonuclease MutS2"/>
    <property type="match status" value="1"/>
</dbReference>
<dbReference type="FunFam" id="3.40.50.300:FF:000830">
    <property type="entry name" value="Endonuclease MutS2"/>
    <property type="match status" value="1"/>
</dbReference>
<dbReference type="Gene3D" id="3.30.1370.110">
    <property type="match status" value="1"/>
</dbReference>
<dbReference type="Gene3D" id="3.40.50.300">
    <property type="entry name" value="P-loop containing nucleotide triphosphate hydrolases"/>
    <property type="match status" value="1"/>
</dbReference>
<dbReference type="HAMAP" id="MF_00092">
    <property type="entry name" value="MutS2"/>
    <property type="match status" value="1"/>
</dbReference>
<dbReference type="InterPro" id="IPR000432">
    <property type="entry name" value="DNA_mismatch_repair_MutS_C"/>
</dbReference>
<dbReference type="InterPro" id="IPR007696">
    <property type="entry name" value="DNA_mismatch_repair_MutS_core"/>
</dbReference>
<dbReference type="InterPro" id="IPR036187">
    <property type="entry name" value="DNA_mismatch_repair_MutS_sf"/>
</dbReference>
<dbReference type="InterPro" id="IPR046893">
    <property type="entry name" value="MSSS"/>
</dbReference>
<dbReference type="InterPro" id="IPR045076">
    <property type="entry name" value="MutS"/>
</dbReference>
<dbReference type="InterPro" id="IPR005747">
    <property type="entry name" value="MutS2"/>
</dbReference>
<dbReference type="InterPro" id="IPR027417">
    <property type="entry name" value="P-loop_NTPase"/>
</dbReference>
<dbReference type="InterPro" id="IPR002625">
    <property type="entry name" value="Smr_dom"/>
</dbReference>
<dbReference type="InterPro" id="IPR036063">
    <property type="entry name" value="Smr_dom_sf"/>
</dbReference>
<dbReference type="NCBIfam" id="TIGR01069">
    <property type="entry name" value="mutS2"/>
    <property type="match status" value="1"/>
</dbReference>
<dbReference type="PANTHER" id="PTHR48466:SF2">
    <property type="entry name" value="OS10G0509000 PROTEIN"/>
    <property type="match status" value="1"/>
</dbReference>
<dbReference type="PANTHER" id="PTHR48466">
    <property type="entry name" value="OS10G0509000 PROTEIN-RELATED"/>
    <property type="match status" value="1"/>
</dbReference>
<dbReference type="Pfam" id="PF20297">
    <property type="entry name" value="MSSS"/>
    <property type="match status" value="1"/>
</dbReference>
<dbReference type="Pfam" id="PF00488">
    <property type="entry name" value="MutS_V"/>
    <property type="match status" value="1"/>
</dbReference>
<dbReference type="Pfam" id="PF01713">
    <property type="entry name" value="Smr"/>
    <property type="match status" value="1"/>
</dbReference>
<dbReference type="PIRSF" id="PIRSF005814">
    <property type="entry name" value="MutS_YshD"/>
    <property type="match status" value="1"/>
</dbReference>
<dbReference type="SMART" id="SM00534">
    <property type="entry name" value="MUTSac"/>
    <property type="match status" value="1"/>
</dbReference>
<dbReference type="SMART" id="SM00533">
    <property type="entry name" value="MUTSd"/>
    <property type="match status" value="1"/>
</dbReference>
<dbReference type="SMART" id="SM00463">
    <property type="entry name" value="SMR"/>
    <property type="match status" value="1"/>
</dbReference>
<dbReference type="SUPFAM" id="SSF48334">
    <property type="entry name" value="DNA repair protein MutS, domain III"/>
    <property type="match status" value="1"/>
</dbReference>
<dbReference type="SUPFAM" id="SSF52540">
    <property type="entry name" value="P-loop containing nucleoside triphosphate hydrolases"/>
    <property type="match status" value="1"/>
</dbReference>
<dbReference type="SUPFAM" id="SSF160443">
    <property type="entry name" value="SMR domain-like"/>
    <property type="match status" value="1"/>
</dbReference>
<dbReference type="PROSITE" id="PS00486">
    <property type="entry name" value="DNA_MISMATCH_REPAIR_2"/>
    <property type="match status" value="1"/>
</dbReference>
<dbReference type="PROSITE" id="PS50828">
    <property type="entry name" value="SMR"/>
    <property type="match status" value="1"/>
</dbReference>
<reference key="1">
    <citation type="journal article" date="2007" name="PLoS ONE">
        <title>Analysis of the neurotoxin complex genes in Clostridium botulinum A1-A4 and B1 strains: BoNT/A3, /Ba4 and /B1 clusters are located within plasmids.</title>
        <authorList>
            <person name="Smith T.J."/>
            <person name="Hill K.K."/>
            <person name="Foley B.T."/>
            <person name="Detter J.C."/>
            <person name="Munk A.C."/>
            <person name="Bruce D.C."/>
            <person name="Doggett N.A."/>
            <person name="Smith L.A."/>
            <person name="Marks J.D."/>
            <person name="Xie G."/>
            <person name="Brettin T.S."/>
        </authorList>
    </citation>
    <scope>NUCLEOTIDE SEQUENCE [LARGE SCALE GENOMIC DNA]</scope>
    <source>
        <strain>Okra / Type B1</strain>
    </source>
</reference>
<comment type="function">
    <text evidence="1">Endonuclease that is involved in the suppression of homologous recombination and thus may have a key role in the control of bacterial genetic diversity.</text>
</comment>
<comment type="function">
    <text evidence="1">Acts as a ribosome collision sensor, splitting the ribosome into its 2 subunits. Detects stalled/collided 70S ribosomes which it binds and splits by an ATP-hydrolysis driven conformational change. Acts upstream of the ribosome quality control system (RQC), a ribosome-associated complex that mediates the extraction of incompletely synthesized nascent chains from stalled ribosomes and their subsequent degradation. Probably generates substrates for RQC.</text>
</comment>
<comment type="subunit">
    <text evidence="1">Homodimer. Binds to stalled ribosomes, contacting rRNA.</text>
</comment>
<comment type="similarity">
    <text evidence="1">Belongs to the DNA mismatch repair MutS family. MutS2 subfamily.</text>
</comment>
<organism>
    <name type="scientific">Clostridium botulinum (strain Okra / Type B1)</name>
    <dbReference type="NCBI Taxonomy" id="498213"/>
    <lineage>
        <taxon>Bacteria</taxon>
        <taxon>Bacillati</taxon>
        <taxon>Bacillota</taxon>
        <taxon>Clostridia</taxon>
        <taxon>Eubacteriales</taxon>
        <taxon>Clostridiaceae</taxon>
        <taxon>Clostridium</taxon>
    </lineage>
</organism>
<keyword id="KW-0067">ATP-binding</keyword>
<keyword id="KW-0238">DNA-binding</keyword>
<keyword id="KW-0255">Endonuclease</keyword>
<keyword id="KW-0378">Hydrolase</keyword>
<keyword id="KW-0540">Nuclease</keyword>
<keyword id="KW-0547">Nucleotide-binding</keyword>
<keyword id="KW-0694">RNA-binding</keyword>
<keyword id="KW-0699">rRNA-binding</keyword>
<protein>
    <recommendedName>
        <fullName evidence="1">Endonuclease MutS2</fullName>
        <ecNumber evidence="1">3.1.-.-</ecNumber>
    </recommendedName>
    <alternativeName>
        <fullName evidence="1">Ribosome-associated protein quality control-upstream factor</fullName>
        <shortName evidence="1">RQC-upstream factor</shortName>
        <shortName evidence="1">RqcU</shortName>
        <ecNumber evidence="1">3.6.4.-</ecNumber>
    </alternativeName>
</protein>
<name>MUTS2_CLOBK</name>
<sequence length="788" mass="88722">MKDKSIKVLEFNKIQEFLKNYTCTKAAKDIIEDLKPYDSVYEVREHLEETKEAFKLLITKGAPPFEGVYDIRSGISLAEKRSTLLPGQLLKIAAVLRCARRFKEYINHKEEEESYRVLENICEGIFSLPKIEEEIFNAIEGEDEIADRASSTLYNIRRSLKEKNYSVRDKINSLVRSYSSYLQENIYTVRGDRYVLPVKAEHKGAVPGLVHDQSSTGATLFIEPMSLVNLNNEIKELMLKEKAEIERILTVLSAKINANITGVKTDANIVWELDFIFAKAKFASEYNCTCPTINDEGIVDIIEGRHPLIDRREVVPISVKLGEEFTSLMITGPNTGGKTVTLKTVGLIHLMAMSGLMIPARENSVISYFNNVFADIGDEQSIEQSLSTFSSHMKNIVEIMDKADENSLVLFDELGAGTDPTEGAALAISILENLRKRGTKIIATTHYSELKAYALKKEGVENASVEFDVETLRPTYRLLIGIPGKSNAFEISKRLGLPDYIIDFARENISNENIRFEELIENLQEKSIKAQEDARLAENLKLERDKEKKKYEEKLEGLQKVRDNALIDARREAKNIIKEAKEEADKILKDIRQLERMGYSSDARRKLEEERKKLKDKLDSIEEKEIKTVHKGEALKNVKEGDEVLLASINQKVIVLSKPDNKGDVLVQAGIMKITANIKDLRAAKGSNSNSSSSKIKKSKKLNLNLRRVESSVDLRGMDAEEAIYTVDKYLDEAYLGGLGEVTIVHGKGTGVLRKTIMDMLKGHSHVKKYRLGEYGEGGTGVTVVELK</sequence>
<proteinExistence type="inferred from homology"/>
<feature type="chain" id="PRO_1000093348" description="Endonuclease MutS2">
    <location>
        <begin position="1"/>
        <end position="788"/>
    </location>
</feature>
<feature type="domain" description="Smr" evidence="1">
    <location>
        <begin position="713"/>
        <end position="788"/>
    </location>
</feature>
<feature type="binding site" evidence="1">
    <location>
        <begin position="332"/>
        <end position="339"/>
    </location>
    <ligand>
        <name>ATP</name>
        <dbReference type="ChEBI" id="CHEBI:30616"/>
    </ligand>
</feature>
<gene>
    <name evidence="1" type="primary">mutS2</name>
    <name evidence="1" type="synonym">rqcU</name>
    <name type="ordered locus">CLD_1418</name>
</gene>